<keyword id="KW-1185">Reference proteome</keyword>
<keyword id="KW-0687">Ribonucleoprotein</keyword>
<keyword id="KW-0689">Ribosomal protein</keyword>
<proteinExistence type="inferred from homology"/>
<protein>
    <recommendedName>
        <fullName evidence="1">Small ribosomal subunit protein bS16</fullName>
    </recommendedName>
    <alternativeName>
        <fullName evidence="2">30S ribosomal protein S16</fullName>
    </alternativeName>
</protein>
<organism>
    <name type="scientific">Desulforapulum autotrophicum (strain ATCC 43914 / DSM 3382 / VKM B-1955 / HRM2)</name>
    <name type="common">Desulfobacterium autotrophicum</name>
    <dbReference type="NCBI Taxonomy" id="177437"/>
    <lineage>
        <taxon>Bacteria</taxon>
        <taxon>Pseudomonadati</taxon>
        <taxon>Thermodesulfobacteriota</taxon>
        <taxon>Desulfobacteria</taxon>
        <taxon>Desulfobacterales</taxon>
        <taxon>Desulfobacteraceae</taxon>
        <taxon>Desulforapulum</taxon>
    </lineage>
</organism>
<comment type="similarity">
    <text evidence="1">Belongs to the bacterial ribosomal protein bS16 family.</text>
</comment>
<reference key="1">
    <citation type="journal article" date="2009" name="Environ. Microbiol.">
        <title>Genome sequence of Desulfobacterium autotrophicum HRM2, a marine sulfate reducer oxidizing organic carbon completely to carbon dioxide.</title>
        <authorList>
            <person name="Strittmatter A.W."/>
            <person name="Liesegang H."/>
            <person name="Rabus R."/>
            <person name="Decker I."/>
            <person name="Amann J."/>
            <person name="Andres S."/>
            <person name="Henne A."/>
            <person name="Fricke W.F."/>
            <person name="Martinez-Arias R."/>
            <person name="Bartels D."/>
            <person name="Goesmann A."/>
            <person name="Krause L."/>
            <person name="Puehler A."/>
            <person name="Klenk H.P."/>
            <person name="Richter M."/>
            <person name="Schuler M."/>
            <person name="Gloeckner F.O."/>
            <person name="Meyerdierks A."/>
            <person name="Gottschalk G."/>
            <person name="Amann R."/>
        </authorList>
    </citation>
    <scope>NUCLEOTIDE SEQUENCE [LARGE SCALE GENOMIC DNA]</scope>
    <source>
        <strain>ATCC 43914 / DSM 3382 / VKM B-1955 / HRM2</strain>
    </source>
</reference>
<gene>
    <name evidence="1" type="primary">rpsP</name>
    <name type="ordered locus">HRM2_31010</name>
</gene>
<accession>C0QKU4</accession>
<feature type="chain" id="PRO_1000205754" description="Small ribosomal subunit protein bS16">
    <location>
        <begin position="1"/>
        <end position="84"/>
    </location>
</feature>
<evidence type="ECO:0000255" key="1">
    <source>
        <dbReference type="HAMAP-Rule" id="MF_00385"/>
    </source>
</evidence>
<evidence type="ECO:0000305" key="2"/>
<dbReference type="EMBL" id="CP001087">
    <property type="protein sequence ID" value="ACN16184.1"/>
    <property type="molecule type" value="Genomic_DNA"/>
</dbReference>
<dbReference type="RefSeq" id="WP_015904946.1">
    <property type="nucleotide sequence ID" value="NC_012108.1"/>
</dbReference>
<dbReference type="SMR" id="C0QKU4"/>
<dbReference type="STRING" id="177437.HRM2_31010"/>
<dbReference type="KEGG" id="dat:HRM2_31010"/>
<dbReference type="eggNOG" id="COG0228">
    <property type="taxonomic scope" value="Bacteria"/>
</dbReference>
<dbReference type="HOGENOM" id="CLU_100590_5_0_7"/>
<dbReference type="OrthoDB" id="9807878at2"/>
<dbReference type="Proteomes" id="UP000000442">
    <property type="component" value="Chromosome"/>
</dbReference>
<dbReference type="GO" id="GO:0005737">
    <property type="term" value="C:cytoplasm"/>
    <property type="evidence" value="ECO:0007669"/>
    <property type="project" value="UniProtKB-ARBA"/>
</dbReference>
<dbReference type="GO" id="GO:0015935">
    <property type="term" value="C:small ribosomal subunit"/>
    <property type="evidence" value="ECO:0007669"/>
    <property type="project" value="TreeGrafter"/>
</dbReference>
<dbReference type="GO" id="GO:0003735">
    <property type="term" value="F:structural constituent of ribosome"/>
    <property type="evidence" value="ECO:0007669"/>
    <property type="project" value="InterPro"/>
</dbReference>
<dbReference type="GO" id="GO:0006412">
    <property type="term" value="P:translation"/>
    <property type="evidence" value="ECO:0007669"/>
    <property type="project" value="UniProtKB-UniRule"/>
</dbReference>
<dbReference type="Gene3D" id="3.30.1320.10">
    <property type="match status" value="1"/>
</dbReference>
<dbReference type="HAMAP" id="MF_00385">
    <property type="entry name" value="Ribosomal_bS16"/>
    <property type="match status" value="1"/>
</dbReference>
<dbReference type="InterPro" id="IPR000307">
    <property type="entry name" value="Ribosomal_bS16"/>
</dbReference>
<dbReference type="InterPro" id="IPR020592">
    <property type="entry name" value="Ribosomal_bS16_CS"/>
</dbReference>
<dbReference type="InterPro" id="IPR023803">
    <property type="entry name" value="Ribosomal_bS16_dom_sf"/>
</dbReference>
<dbReference type="NCBIfam" id="TIGR00002">
    <property type="entry name" value="S16"/>
    <property type="match status" value="1"/>
</dbReference>
<dbReference type="PANTHER" id="PTHR12919">
    <property type="entry name" value="30S RIBOSOMAL PROTEIN S16"/>
    <property type="match status" value="1"/>
</dbReference>
<dbReference type="PANTHER" id="PTHR12919:SF20">
    <property type="entry name" value="SMALL RIBOSOMAL SUBUNIT PROTEIN BS16M"/>
    <property type="match status" value="1"/>
</dbReference>
<dbReference type="Pfam" id="PF00886">
    <property type="entry name" value="Ribosomal_S16"/>
    <property type="match status" value="1"/>
</dbReference>
<dbReference type="SUPFAM" id="SSF54565">
    <property type="entry name" value="Ribosomal protein S16"/>
    <property type="match status" value="1"/>
</dbReference>
<dbReference type="PROSITE" id="PS00732">
    <property type="entry name" value="RIBOSOMAL_S16"/>
    <property type="match status" value="1"/>
</dbReference>
<name>RS16_DESAH</name>
<sequence>MSVKIRLARRGAKKKPFYRIVAADVESPRDGKFLESVGTYDPMVEPAAIILNEERIRYWMGEGATPTTTVKSILKKQGFSSNPA</sequence>